<comment type="function">
    <text evidence="1">Glutathione S-transferase that catalyzes the nucleophilic attack of the sulfur atom of glutathione on the electrophilic groups of a wide range of exogenous and endogenous compounds. Involved in the formation of glutathione conjugates of both prostaglandin A2 (PGA2) and prostaglandin J2 (PGJ2). It also catalyzes the isomerization of D5-androstene-3,17-dione (AD) into D4-androstene-3,17-dione and may therefore play an important role in hormone biosynthesis. Through its glutathione-dependent peroxidase activity toward the fatty acid hydroperoxide (13S)-hydroperoxy-(9Z,11E)-octadecadienoate/13-HPODE it is also involved in the metabolism of oxidized linoleic acid.</text>
</comment>
<comment type="catalytic activity">
    <reaction evidence="1">
        <text>RX + glutathione = an S-substituted glutathione + a halide anion + H(+)</text>
        <dbReference type="Rhea" id="RHEA:16437"/>
        <dbReference type="ChEBI" id="CHEBI:15378"/>
        <dbReference type="ChEBI" id="CHEBI:16042"/>
        <dbReference type="ChEBI" id="CHEBI:17792"/>
        <dbReference type="ChEBI" id="CHEBI:57925"/>
        <dbReference type="ChEBI" id="CHEBI:90779"/>
        <dbReference type="EC" id="2.5.1.18"/>
    </reaction>
    <physiologicalReaction direction="left-to-right" evidence="1">
        <dbReference type="Rhea" id="RHEA:16438"/>
    </physiologicalReaction>
</comment>
<comment type="catalytic activity">
    <reaction evidence="1">
        <text>prostaglandin A2 + glutathione = prostaglandin A2-S-(R)-glutathione</text>
        <dbReference type="Rhea" id="RHEA:50796"/>
        <dbReference type="ChEBI" id="CHEBI:57925"/>
        <dbReference type="ChEBI" id="CHEBI:133370"/>
        <dbReference type="ChEBI" id="CHEBI:133768"/>
    </reaction>
    <physiologicalReaction direction="left-to-right" evidence="1">
        <dbReference type="Rhea" id="RHEA:50797"/>
    </physiologicalReaction>
</comment>
<comment type="catalytic activity">
    <reaction evidence="1">
        <text>prostaglandin J2 + glutathione = prostaglandin J2-S-(R)-glutathione</text>
        <dbReference type="Rhea" id="RHEA:50804"/>
        <dbReference type="ChEBI" id="CHEBI:57925"/>
        <dbReference type="ChEBI" id="CHEBI:133396"/>
        <dbReference type="ChEBI" id="CHEBI:133771"/>
    </reaction>
    <physiologicalReaction direction="left-to-right" evidence="1">
        <dbReference type="Rhea" id="RHEA:50805"/>
    </physiologicalReaction>
</comment>
<comment type="catalytic activity">
    <reaction evidence="1">
        <text>(13S)-hydroperoxy-(9Z,11E)-octadecadienoate + 2 glutathione = (13S)-hydroxy-(9Z,11E)-octadecadienoate + glutathione disulfide + H2O</text>
        <dbReference type="Rhea" id="RHEA:48888"/>
        <dbReference type="ChEBI" id="CHEBI:15377"/>
        <dbReference type="ChEBI" id="CHEBI:57466"/>
        <dbReference type="ChEBI" id="CHEBI:57925"/>
        <dbReference type="ChEBI" id="CHEBI:58297"/>
        <dbReference type="ChEBI" id="CHEBI:90850"/>
    </reaction>
    <physiologicalReaction direction="left-to-right" evidence="1">
        <dbReference type="Rhea" id="RHEA:48889"/>
    </physiologicalReaction>
</comment>
<comment type="catalytic activity">
    <reaction evidence="1">
        <text>androst-5-ene-3,17-dione = androst-4-ene-3,17-dione</text>
        <dbReference type="Rhea" id="RHEA:43936"/>
        <dbReference type="ChEBI" id="CHEBI:16422"/>
        <dbReference type="ChEBI" id="CHEBI:83865"/>
    </reaction>
    <physiologicalReaction direction="left-to-right" evidence="1">
        <dbReference type="Rhea" id="RHEA:43937"/>
    </physiologicalReaction>
</comment>
<comment type="subunit">
    <text evidence="1">Homodimer or heterodimer of GSTA1 and GSTA2.</text>
</comment>
<comment type="subcellular location">
    <subcellularLocation>
        <location>Cytoplasm</location>
    </subcellularLocation>
</comment>
<comment type="similarity">
    <text evidence="6">Belongs to the GST superfamily. Alpha family.</text>
</comment>
<name>GSTA1_CAVPO</name>
<organism>
    <name type="scientific">Cavia porcellus</name>
    <name type="common">Guinea pig</name>
    <dbReference type="NCBI Taxonomy" id="10141"/>
    <lineage>
        <taxon>Eukaryota</taxon>
        <taxon>Metazoa</taxon>
        <taxon>Chordata</taxon>
        <taxon>Craniata</taxon>
        <taxon>Vertebrata</taxon>
        <taxon>Euteleostomi</taxon>
        <taxon>Mammalia</taxon>
        <taxon>Eutheria</taxon>
        <taxon>Euarchontoglires</taxon>
        <taxon>Glires</taxon>
        <taxon>Rodentia</taxon>
        <taxon>Hystricomorpha</taxon>
        <taxon>Caviidae</taxon>
        <taxon>Cavia</taxon>
    </lineage>
</organism>
<reference key="1">
    <citation type="journal article" date="1993" name="J. Biochem.">
        <title>Amino acid sequence of glutathione S-transferase a from guinea pig liver.</title>
        <authorList>
            <person name="Kamei-Hayashi K."/>
            <person name="Oshino R."/>
            <person name="Hara S."/>
        </authorList>
    </citation>
    <scope>PROTEIN SEQUENCE</scope>
    <scope>ACETYLATION AT SER-1</scope>
    <source>
        <strain>Hartley</strain>
        <tissue>Liver</tissue>
    </source>
</reference>
<reference key="2">
    <citation type="journal article" date="1990" name="J. Biochem.">
        <title>Purification and characterization of glutathione S-transferases from guinea pig liver.</title>
        <authorList>
            <person name="Oshino R."/>
            <person name="Kamei K."/>
            <person name="Nishioka M."/>
            <person name="Shin M."/>
        </authorList>
    </citation>
    <scope>CHARACTERIZATION</scope>
    <source>
        <strain>Hartley</strain>
        <tissue>Liver</tissue>
    </source>
</reference>
<sequence length="218" mass="25191">SGKPVLHYFNVQGRMESIRWLLAAAGVEFEEKLIMCQEDLDKLKNDGLLMFQQVPMVEMDGMKMVQSRAILNYIATKYNLYGKDTKERLLIDMYTEGMTDLYELFFKVILAPPEEKDAAKSLIKDRAKNRFLPAFEKVLKSHGQGYLVGNKLSKADILLTELLYMVEEFDASLLANFTLLQALKTRVSNLPNVKKFLQPGSQRKPFPTQEMFEEMRKF</sequence>
<dbReference type="EC" id="2.5.1.18" evidence="1"/>
<dbReference type="PIR" id="JX0294">
    <property type="entry name" value="JX0294"/>
</dbReference>
<dbReference type="SMR" id="P81706"/>
<dbReference type="FunCoup" id="P81706">
    <property type="interactions" value="153"/>
</dbReference>
<dbReference type="STRING" id="10141.ENSCPOP00000021161"/>
<dbReference type="iPTMnet" id="P81706"/>
<dbReference type="eggNOG" id="KOG1695">
    <property type="taxonomic scope" value="Eukaryota"/>
</dbReference>
<dbReference type="InParanoid" id="P81706"/>
<dbReference type="Proteomes" id="UP000005447">
    <property type="component" value="Unassembled WGS sequence"/>
</dbReference>
<dbReference type="GO" id="GO:0005829">
    <property type="term" value="C:cytosol"/>
    <property type="evidence" value="ECO:0007669"/>
    <property type="project" value="TreeGrafter"/>
</dbReference>
<dbReference type="GO" id="GO:0070062">
    <property type="term" value="C:extracellular exosome"/>
    <property type="evidence" value="ECO:0007669"/>
    <property type="project" value="TreeGrafter"/>
</dbReference>
<dbReference type="GO" id="GO:0004364">
    <property type="term" value="F:glutathione transferase activity"/>
    <property type="evidence" value="ECO:0000250"/>
    <property type="project" value="UniProtKB"/>
</dbReference>
<dbReference type="GO" id="GO:0006749">
    <property type="term" value="P:glutathione metabolic process"/>
    <property type="evidence" value="ECO:0000250"/>
    <property type="project" value="UniProtKB"/>
</dbReference>
<dbReference type="GO" id="GO:0006805">
    <property type="term" value="P:xenobiotic metabolic process"/>
    <property type="evidence" value="ECO:0007669"/>
    <property type="project" value="TreeGrafter"/>
</dbReference>
<dbReference type="FunFam" id="1.20.1050.10:FF:000005">
    <property type="entry name" value="Glutathione S-transferase A1"/>
    <property type="match status" value="1"/>
</dbReference>
<dbReference type="Gene3D" id="1.20.1050.10">
    <property type="match status" value="1"/>
</dbReference>
<dbReference type="Gene3D" id="3.40.30.10">
    <property type="entry name" value="Glutaredoxin"/>
    <property type="match status" value="1"/>
</dbReference>
<dbReference type="InterPro" id="IPR010987">
    <property type="entry name" value="Glutathione-S-Trfase_C-like"/>
</dbReference>
<dbReference type="InterPro" id="IPR036282">
    <property type="entry name" value="Glutathione-S-Trfase_C_sf"/>
</dbReference>
<dbReference type="InterPro" id="IPR040079">
    <property type="entry name" value="Glutathione_S-Trfase"/>
</dbReference>
<dbReference type="InterPro" id="IPR004045">
    <property type="entry name" value="Glutathione_S-Trfase_N"/>
</dbReference>
<dbReference type="InterPro" id="IPR003080">
    <property type="entry name" value="GST_alpha"/>
</dbReference>
<dbReference type="InterPro" id="IPR004046">
    <property type="entry name" value="GST_C"/>
</dbReference>
<dbReference type="InterPro" id="IPR050213">
    <property type="entry name" value="GST_superfamily"/>
</dbReference>
<dbReference type="InterPro" id="IPR036249">
    <property type="entry name" value="Thioredoxin-like_sf"/>
</dbReference>
<dbReference type="PANTHER" id="PTHR11571">
    <property type="entry name" value="GLUTATHIONE S-TRANSFERASE"/>
    <property type="match status" value="1"/>
</dbReference>
<dbReference type="PANTHER" id="PTHR11571:SF233">
    <property type="entry name" value="GLUTATHIONE S-TRANSFERASE-RELATED"/>
    <property type="match status" value="1"/>
</dbReference>
<dbReference type="Pfam" id="PF14497">
    <property type="entry name" value="GST_C_3"/>
    <property type="match status" value="1"/>
</dbReference>
<dbReference type="Pfam" id="PF02798">
    <property type="entry name" value="GST_N"/>
    <property type="match status" value="1"/>
</dbReference>
<dbReference type="PRINTS" id="PR01266">
    <property type="entry name" value="GSTRNSFRASEA"/>
</dbReference>
<dbReference type="SFLD" id="SFLDG01205">
    <property type="entry name" value="AMPS.1"/>
    <property type="match status" value="1"/>
</dbReference>
<dbReference type="SFLD" id="SFLDS00019">
    <property type="entry name" value="Glutathione_Transferase_(cytos"/>
    <property type="match status" value="1"/>
</dbReference>
<dbReference type="SUPFAM" id="SSF47616">
    <property type="entry name" value="GST C-terminal domain-like"/>
    <property type="match status" value="1"/>
</dbReference>
<dbReference type="SUPFAM" id="SSF52833">
    <property type="entry name" value="Thioredoxin-like"/>
    <property type="match status" value="1"/>
</dbReference>
<dbReference type="PROSITE" id="PS50405">
    <property type="entry name" value="GST_CTER"/>
    <property type="match status" value="1"/>
</dbReference>
<dbReference type="PROSITE" id="PS50404">
    <property type="entry name" value="GST_NTER"/>
    <property type="match status" value="1"/>
</dbReference>
<keyword id="KW-0007">Acetylation</keyword>
<keyword id="KW-0963">Cytoplasm</keyword>
<keyword id="KW-0903">Direct protein sequencing</keyword>
<keyword id="KW-1185">Reference proteome</keyword>
<keyword id="KW-0808">Transferase</keyword>
<accession>P81706</accession>
<protein>
    <recommendedName>
        <fullName>Glutathione S-transferase A</fullName>
        <shortName>GST A</shortName>
        <ecNumber evidence="1">2.5.1.18</ecNumber>
    </recommendedName>
    <alternativeName>
        <fullName>Class-alpha</fullName>
    </alternativeName>
    <alternativeName>
        <fullName>GGST A1-1</fullName>
    </alternativeName>
</protein>
<evidence type="ECO:0000250" key="1">
    <source>
        <dbReference type="UniProtKB" id="P08263"/>
    </source>
</evidence>
<evidence type="ECO:0000250" key="2">
    <source>
        <dbReference type="UniProtKB" id="P13745"/>
    </source>
</evidence>
<evidence type="ECO:0000250" key="3">
    <source>
        <dbReference type="UniProtKB" id="P30115"/>
    </source>
</evidence>
<evidence type="ECO:0000250" key="4">
    <source>
        <dbReference type="UniProtKB" id="P30711"/>
    </source>
</evidence>
<evidence type="ECO:0000269" key="5">
    <source>
    </source>
</evidence>
<evidence type="ECO:0000305" key="6"/>
<proteinExistence type="evidence at protein level"/>
<feature type="chain" id="PRO_0000185782" description="Glutathione S-transferase A">
    <location>
        <begin position="1"/>
        <end position="218"/>
    </location>
</feature>
<feature type="domain" description="GST N-terminal">
    <location>
        <begin position="2"/>
        <end position="82"/>
    </location>
</feature>
<feature type="domain" description="GST C-terminal">
    <location>
        <begin position="84"/>
        <end position="206"/>
    </location>
</feature>
<feature type="binding site" evidence="2">
    <location>
        <position position="8"/>
    </location>
    <ligand>
        <name>glutathione</name>
        <dbReference type="ChEBI" id="CHEBI:57925"/>
    </ligand>
</feature>
<feature type="binding site" evidence="2">
    <location>
        <position position="44"/>
    </location>
    <ligand>
        <name>glutathione</name>
        <dbReference type="ChEBI" id="CHEBI:57925"/>
    </ligand>
</feature>
<feature type="binding site" evidence="4">
    <location>
        <begin position="53"/>
        <end position="54"/>
    </location>
    <ligand>
        <name>glutathione</name>
        <dbReference type="ChEBI" id="CHEBI:57925"/>
    </ligand>
</feature>
<feature type="binding site" evidence="2">
    <location>
        <begin position="66"/>
        <end position="67"/>
    </location>
    <ligand>
        <name>glutathione</name>
        <dbReference type="ChEBI" id="CHEBI:57925"/>
    </ligand>
</feature>
<feature type="modified residue" description="N-acetylserine" evidence="5">
    <location>
        <position position="1"/>
    </location>
</feature>
<feature type="modified residue" description="N6-succinyllysine" evidence="3">
    <location>
        <position position="3"/>
    </location>
</feature>